<gene>
    <name type="primary">nme5</name>
    <name type="ORF">zgc:92812</name>
</gene>
<reference key="1">
    <citation type="journal article" date="2013" name="Nature">
        <title>The zebrafish reference genome sequence and its relationship to the human genome.</title>
        <authorList>
            <person name="Howe K."/>
            <person name="Clark M.D."/>
            <person name="Torroja C.F."/>
            <person name="Torrance J."/>
            <person name="Berthelot C."/>
            <person name="Muffato M."/>
            <person name="Collins J.E."/>
            <person name="Humphray S."/>
            <person name="McLaren K."/>
            <person name="Matthews L."/>
            <person name="McLaren S."/>
            <person name="Sealy I."/>
            <person name="Caccamo M."/>
            <person name="Churcher C."/>
            <person name="Scott C."/>
            <person name="Barrett J.C."/>
            <person name="Koch R."/>
            <person name="Rauch G.J."/>
            <person name="White S."/>
            <person name="Chow W."/>
            <person name="Kilian B."/>
            <person name="Quintais L.T."/>
            <person name="Guerra-Assuncao J.A."/>
            <person name="Zhou Y."/>
            <person name="Gu Y."/>
            <person name="Yen J."/>
            <person name="Vogel J.H."/>
            <person name="Eyre T."/>
            <person name="Redmond S."/>
            <person name="Banerjee R."/>
            <person name="Chi J."/>
            <person name="Fu B."/>
            <person name="Langley E."/>
            <person name="Maguire S.F."/>
            <person name="Laird G.K."/>
            <person name="Lloyd D."/>
            <person name="Kenyon E."/>
            <person name="Donaldson S."/>
            <person name="Sehra H."/>
            <person name="Almeida-King J."/>
            <person name="Loveland J."/>
            <person name="Trevanion S."/>
            <person name="Jones M."/>
            <person name="Quail M."/>
            <person name="Willey D."/>
            <person name="Hunt A."/>
            <person name="Burton J."/>
            <person name="Sims S."/>
            <person name="McLay K."/>
            <person name="Plumb B."/>
            <person name="Davis J."/>
            <person name="Clee C."/>
            <person name="Oliver K."/>
            <person name="Clark R."/>
            <person name="Riddle C."/>
            <person name="Elliot D."/>
            <person name="Threadgold G."/>
            <person name="Harden G."/>
            <person name="Ware D."/>
            <person name="Begum S."/>
            <person name="Mortimore B."/>
            <person name="Kerry G."/>
            <person name="Heath P."/>
            <person name="Phillimore B."/>
            <person name="Tracey A."/>
            <person name="Corby N."/>
            <person name="Dunn M."/>
            <person name="Johnson C."/>
            <person name="Wood J."/>
            <person name="Clark S."/>
            <person name="Pelan S."/>
            <person name="Griffiths G."/>
            <person name="Smith M."/>
            <person name="Glithero R."/>
            <person name="Howden P."/>
            <person name="Barker N."/>
            <person name="Lloyd C."/>
            <person name="Stevens C."/>
            <person name="Harley J."/>
            <person name="Holt K."/>
            <person name="Panagiotidis G."/>
            <person name="Lovell J."/>
            <person name="Beasley H."/>
            <person name="Henderson C."/>
            <person name="Gordon D."/>
            <person name="Auger K."/>
            <person name="Wright D."/>
            <person name="Collins J."/>
            <person name="Raisen C."/>
            <person name="Dyer L."/>
            <person name="Leung K."/>
            <person name="Robertson L."/>
            <person name="Ambridge K."/>
            <person name="Leongamornlert D."/>
            <person name="McGuire S."/>
            <person name="Gilderthorp R."/>
            <person name="Griffiths C."/>
            <person name="Manthravadi D."/>
            <person name="Nichol S."/>
            <person name="Barker G."/>
            <person name="Whitehead S."/>
            <person name="Kay M."/>
            <person name="Brown J."/>
            <person name="Murnane C."/>
            <person name="Gray E."/>
            <person name="Humphries M."/>
            <person name="Sycamore N."/>
            <person name="Barker D."/>
            <person name="Saunders D."/>
            <person name="Wallis J."/>
            <person name="Babbage A."/>
            <person name="Hammond S."/>
            <person name="Mashreghi-Mohammadi M."/>
            <person name="Barr L."/>
            <person name="Martin S."/>
            <person name="Wray P."/>
            <person name="Ellington A."/>
            <person name="Matthews N."/>
            <person name="Ellwood M."/>
            <person name="Woodmansey R."/>
            <person name="Clark G."/>
            <person name="Cooper J."/>
            <person name="Tromans A."/>
            <person name="Grafham D."/>
            <person name="Skuce C."/>
            <person name="Pandian R."/>
            <person name="Andrews R."/>
            <person name="Harrison E."/>
            <person name="Kimberley A."/>
            <person name="Garnett J."/>
            <person name="Fosker N."/>
            <person name="Hall R."/>
            <person name="Garner P."/>
            <person name="Kelly D."/>
            <person name="Bird C."/>
            <person name="Palmer S."/>
            <person name="Gehring I."/>
            <person name="Berger A."/>
            <person name="Dooley C.M."/>
            <person name="Ersan-Urun Z."/>
            <person name="Eser C."/>
            <person name="Geiger H."/>
            <person name="Geisler M."/>
            <person name="Karotki L."/>
            <person name="Kirn A."/>
            <person name="Konantz J."/>
            <person name="Konantz M."/>
            <person name="Oberlander M."/>
            <person name="Rudolph-Geiger S."/>
            <person name="Teucke M."/>
            <person name="Lanz C."/>
            <person name="Raddatz G."/>
            <person name="Osoegawa K."/>
            <person name="Zhu B."/>
            <person name="Rapp A."/>
            <person name="Widaa S."/>
            <person name="Langford C."/>
            <person name="Yang F."/>
            <person name="Schuster S.C."/>
            <person name="Carter N.P."/>
            <person name="Harrow J."/>
            <person name="Ning Z."/>
            <person name="Herrero J."/>
            <person name="Searle S.M."/>
            <person name="Enright A."/>
            <person name="Geisler R."/>
            <person name="Plasterk R.H."/>
            <person name="Lee C."/>
            <person name="Westerfield M."/>
            <person name="de Jong P.J."/>
            <person name="Zon L.I."/>
            <person name="Postlethwait J.H."/>
            <person name="Nusslein-Volhard C."/>
            <person name="Hubbard T.J."/>
            <person name="Roest Crollius H."/>
            <person name="Rogers J."/>
            <person name="Stemple D.L."/>
        </authorList>
    </citation>
    <scope>NUCLEOTIDE SEQUENCE [LARGE SCALE GENOMIC DNA]</scope>
    <source>
        <strain>Tuebingen</strain>
    </source>
</reference>
<reference key="2">
    <citation type="submission" date="2004-07" db="EMBL/GenBank/DDBJ databases">
        <authorList>
            <consortium name="NIH - Zebrafish Gene Collection (ZGC) project"/>
        </authorList>
    </citation>
    <scope>NUCLEOTIDE SEQUENCE [LARGE SCALE MRNA]</scope>
    <source>
        <tissue>Brain</tissue>
    </source>
</reference>
<reference key="3">
    <citation type="journal article" date="2020" name="Clin. Genet.">
        <title>A nonsense variant in NME5 causes human primary ciliary dyskinesia with radial spoke defects.</title>
        <authorList>
            <person name="Cho E.H."/>
            <person name="Huh H.J."/>
            <person name="Jeong I."/>
            <person name="Lee N.Y."/>
            <person name="Koh W.J."/>
            <person name="Park H.C."/>
            <person name="Ki C.S."/>
        </authorList>
    </citation>
    <scope>DISRUPTION PHENOTYPE</scope>
    <scope>FUNCTION</scope>
</reference>
<proteinExistence type="evidence at transcript level"/>
<feature type="chain" id="PRO_0000457895" description="Nucleoside diphosphate kinase homolog 5">
    <location>
        <begin position="1"/>
        <end position="217"/>
    </location>
</feature>
<feature type="region of interest" description="NDK" evidence="4">
    <location>
        <begin position="18"/>
        <end position="151"/>
    </location>
</feature>
<feature type="sequence conflict" description="In Ref. 2; AAH76282." evidence="4" ref="2">
    <original>L</original>
    <variation>S</variation>
    <location>
        <position position="208"/>
    </location>
</feature>
<accession>Q6DGQ8</accession>
<organism>
    <name type="scientific">Danio rerio</name>
    <name type="common">Zebrafish</name>
    <name type="synonym">Brachydanio rerio</name>
    <dbReference type="NCBI Taxonomy" id="7955"/>
    <lineage>
        <taxon>Eukaryota</taxon>
        <taxon>Metazoa</taxon>
        <taxon>Chordata</taxon>
        <taxon>Craniata</taxon>
        <taxon>Vertebrata</taxon>
        <taxon>Euteleostomi</taxon>
        <taxon>Actinopterygii</taxon>
        <taxon>Neopterygii</taxon>
        <taxon>Teleostei</taxon>
        <taxon>Ostariophysi</taxon>
        <taxon>Cypriniformes</taxon>
        <taxon>Danionidae</taxon>
        <taxon>Danioninae</taxon>
        <taxon>Danio</taxon>
    </lineage>
</organism>
<evidence type="ECO:0000250" key="1">
    <source>
        <dbReference type="UniProtKB" id="P56597"/>
    </source>
</evidence>
<evidence type="ECO:0000250" key="2">
    <source>
        <dbReference type="UniProtKB" id="Q99MH5"/>
    </source>
</evidence>
<evidence type="ECO:0000269" key="3">
    <source>
    </source>
</evidence>
<evidence type="ECO:0000305" key="4"/>
<protein>
    <recommendedName>
        <fullName>Nucleoside diphosphate kinase homolog 5</fullName>
    </recommendedName>
    <alternativeName>
        <fullName evidence="4">3'-5' exonuclease NME5</fullName>
        <ecNumber evidence="1">3.1.-.-</ecNumber>
    </alternativeName>
</protein>
<keyword id="KW-0966">Cell projection</keyword>
<keyword id="KW-0217">Developmental protein</keyword>
<keyword id="KW-0378">Hydrolase</keyword>
<keyword id="KW-1185">Reference proteome</keyword>
<comment type="function">
    <text evidence="1 3">Functions as part of axonemal radial spoke complexes that play an important part in the motility of sperm and cilia (PubMed:32185794). Does not seem to have nucleoside diphosphate kinase (NDPK) activity (By similarity). Exhibits a 3'-5' exonuclease activity with a preference for single-stranded DNA, suggesting roles in DNA proofreading and repair (By similarity).</text>
</comment>
<comment type="subcellular location">
    <subcellularLocation>
        <location evidence="2">Cell projection</location>
        <location evidence="2">Cilium</location>
    </subcellularLocation>
</comment>
<comment type="domain">
    <text evidence="1">Does not possess all residues considered to be crucial for the NDPK activity.</text>
</comment>
<comment type="disruption phenotype">
    <text evidence="3">Morpholino knockdown of the gene in embryos results in ciliopathic phenotypes, including a ventrally curved trunk, small eyes, otolith defects, hydrocephalus, and reversed heart looping. In the spine of mutant animals, the cilia of the central canal form normally and there are no changes in the length or number of cilia, indicating that the gene is not required for ciliary development. However, the beating movement of motile cilia is rarely observed in mutant animals.</text>
</comment>
<comment type="similarity">
    <text evidence="4">Belongs to the NDK family.</text>
</comment>
<name>NDK5_DANRE</name>
<sequence>MENDDPQKLMPEPRIFVERTLALIKPDAIHKTDEIEDIILQSGFTILQKRRLQLSPEQCSDFYAEHYGKLHFPHLTAFMSSGPVVALALARDQAIATWKAIMGPVSSIKARETHPDCLRARFGTCDLRNAVHGSETFSAAEREIRFMFPHSVIEPIPMGEAAKDYLSRFINPTLLVGLTELCKIKPEDPYTWLADWLMNNNPNKPKVLDGAAVEEAA</sequence>
<dbReference type="EC" id="3.1.-.-" evidence="1"/>
<dbReference type="EMBL" id="FQ377590">
    <property type="status" value="NOT_ANNOTATED_CDS"/>
    <property type="molecule type" value="Genomic_DNA"/>
</dbReference>
<dbReference type="EMBL" id="BC076282">
    <property type="protein sequence ID" value="AAH76282.1"/>
    <property type="molecule type" value="mRNA"/>
</dbReference>
<dbReference type="RefSeq" id="NP_001002516.2">
    <property type="nucleotide sequence ID" value="NM_001002516.2"/>
</dbReference>
<dbReference type="SMR" id="Q6DGQ8"/>
<dbReference type="FunCoup" id="Q6DGQ8">
    <property type="interactions" value="167"/>
</dbReference>
<dbReference type="GeneID" id="436789"/>
<dbReference type="KEGG" id="dre:436789"/>
<dbReference type="AGR" id="ZFIN:ZDB-GENE-040718-221"/>
<dbReference type="CTD" id="8382"/>
<dbReference type="ZFIN" id="ZDB-GENE-040718-221">
    <property type="gene designation" value="nme5"/>
</dbReference>
<dbReference type="HOGENOM" id="CLU_060216_2_0_1"/>
<dbReference type="OrthoDB" id="1729737at2759"/>
<dbReference type="PhylomeDB" id="Q6DGQ8"/>
<dbReference type="TreeFam" id="TF354225"/>
<dbReference type="PRO" id="PR:Q6DGQ8"/>
<dbReference type="Proteomes" id="UP000000437">
    <property type="component" value="Chromosome 14"/>
</dbReference>
<dbReference type="GO" id="GO:0005929">
    <property type="term" value="C:cilium"/>
    <property type="evidence" value="ECO:0000318"/>
    <property type="project" value="GO_Central"/>
</dbReference>
<dbReference type="GO" id="GO:0008408">
    <property type="term" value="F:3'-5' exonuclease activity"/>
    <property type="evidence" value="ECO:0000250"/>
    <property type="project" value="UniProtKB"/>
</dbReference>
<dbReference type="GO" id="GO:0004550">
    <property type="term" value="F:nucleoside diphosphate kinase activity"/>
    <property type="evidence" value="ECO:0007669"/>
    <property type="project" value="InterPro"/>
</dbReference>
<dbReference type="GO" id="GO:0003341">
    <property type="term" value="P:cilium movement"/>
    <property type="evidence" value="ECO:0000315"/>
    <property type="project" value="UniProtKB"/>
</dbReference>
<dbReference type="GO" id="GO:0006241">
    <property type="term" value="P:CTP biosynthetic process"/>
    <property type="evidence" value="ECO:0007669"/>
    <property type="project" value="InterPro"/>
</dbReference>
<dbReference type="GO" id="GO:0006183">
    <property type="term" value="P:GTP biosynthetic process"/>
    <property type="evidence" value="ECO:0007669"/>
    <property type="project" value="InterPro"/>
</dbReference>
<dbReference type="GO" id="GO:1902176">
    <property type="term" value="P:negative regulation of oxidative stress-induced intrinsic apoptotic signaling pathway"/>
    <property type="evidence" value="ECO:0000318"/>
    <property type="project" value="GO_Central"/>
</dbReference>
<dbReference type="GO" id="GO:0006228">
    <property type="term" value="P:UTP biosynthetic process"/>
    <property type="evidence" value="ECO:0007669"/>
    <property type="project" value="InterPro"/>
</dbReference>
<dbReference type="CDD" id="cd22970">
    <property type="entry name" value="DD_NDKH5-like"/>
    <property type="match status" value="1"/>
</dbReference>
<dbReference type="CDD" id="cd04418">
    <property type="entry name" value="NDPk5"/>
    <property type="match status" value="1"/>
</dbReference>
<dbReference type="FunFam" id="3.30.70.141:FF:000010">
    <property type="entry name" value="Nucleoside diphosphate kinase 7"/>
    <property type="match status" value="1"/>
</dbReference>
<dbReference type="FunFam" id="1.20.890.10:FF:000008">
    <property type="entry name" value="Nucleoside diphosphate kinase homolog 5"/>
    <property type="match status" value="1"/>
</dbReference>
<dbReference type="Gene3D" id="1.20.890.10">
    <property type="entry name" value="cAMP-dependent protein kinase regulatory subunit, dimerization-anchoring domain"/>
    <property type="match status" value="1"/>
</dbReference>
<dbReference type="Gene3D" id="3.30.70.141">
    <property type="entry name" value="Nucleoside diphosphate kinase-like domain"/>
    <property type="match status" value="1"/>
</dbReference>
<dbReference type="InterPro" id="IPR007858">
    <property type="entry name" value="Dpy-30_motif"/>
</dbReference>
<dbReference type="InterPro" id="IPR034907">
    <property type="entry name" value="NDK-like_dom"/>
</dbReference>
<dbReference type="InterPro" id="IPR036850">
    <property type="entry name" value="NDK-like_dom_sf"/>
</dbReference>
<dbReference type="InterPro" id="IPR001564">
    <property type="entry name" value="Nucleoside_diP_kinase"/>
</dbReference>
<dbReference type="PANTHER" id="PTHR46161">
    <property type="entry name" value="NUCLEOSIDE DIPHOSPHATE KINASE"/>
    <property type="match status" value="1"/>
</dbReference>
<dbReference type="PANTHER" id="PTHR46161:SF1">
    <property type="entry name" value="NUCLEOSIDE DIPHOSPHATE KINASE HOMOLOG 5"/>
    <property type="match status" value="1"/>
</dbReference>
<dbReference type="Pfam" id="PF05186">
    <property type="entry name" value="Dpy-30"/>
    <property type="match status" value="1"/>
</dbReference>
<dbReference type="Pfam" id="PF00334">
    <property type="entry name" value="NDK"/>
    <property type="match status" value="1"/>
</dbReference>
<dbReference type="PRINTS" id="PR01243">
    <property type="entry name" value="NUCDPKINASE"/>
</dbReference>
<dbReference type="SMART" id="SM00562">
    <property type="entry name" value="NDK"/>
    <property type="match status" value="1"/>
</dbReference>
<dbReference type="SUPFAM" id="SSF54919">
    <property type="entry name" value="Nucleoside diphosphate kinase, NDK"/>
    <property type="match status" value="1"/>
</dbReference>
<dbReference type="PROSITE" id="PS51374">
    <property type="entry name" value="NDPK_LIKE"/>
    <property type="match status" value="1"/>
</dbReference>